<sequence length="126" mass="14053">MYLTLLKSKLHRACVTHIELEYEGSCAIDSVLLSTAGIQEYEQIHIYNLTNGERFVTYAIRAEDNSGIISVNGAAAHKACPGDRLIICTYAVFERSEMDSFKPLLIYLDDRNFITHTGNAIPVQVA</sequence>
<feature type="chain" id="PRO_0000236877" description="Aspartate 1-decarboxylase beta chain" evidence="1">
    <location>
        <begin position="1"/>
        <end position="24"/>
    </location>
</feature>
<feature type="chain" id="PRO_0000236878" description="Aspartate 1-decarboxylase alpha chain" evidence="1">
    <location>
        <begin position="25"/>
        <end position="126"/>
    </location>
</feature>
<feature type="active site" description="Schiff-base intermediate with substrate; via pyruvic acid" evidence="1">
    <location>
        <position position="25"/>
    </location>
</feature>
<feature type="active site" description="Proton donor" evidence="1">
    <location>
        <position position="58"/>
    </location>
</feature>
<feature type="binding site" evidence="1">
    <location>
        <position position="57"/>
    </location>
    <ligand>
        <name>substrate</name>
    </ligand>
</feature>
<feature type="binding site" evidence="1">
    <location>
        <begin position="73"/>
        <end position="75"/>
    </location>
    <ligand>
        <name>substrate</name>
    </ligand>
</feature>
<feature type="modified residue" description="Pyruvic acid (Ser)" evidence="1">
    <location>
        <position position="25"/>
    </location>
</feature>
<reference key="1">
    <citation type="journal article" date="2006" name="Appl. Environ. Microbiol.">
        <title>Complete genome sequence of the marine, chemolithoautotrophic, ammonia-oxidizing bacterium Nitrosococcus oceani ATCC 19707.</title>
        <authorList>
            <person name="Klotz M.G."/>
            <person name="Arp D.J."/>
            <person name="Chain P.S.G."/>
            <person name="El-Sheikh A.F."/>
            <person name="Hauser L.J."/>
            <person name="Hommes N.G."/>
            <person name="Larimer F.W."/>
            <person name="Malfatti S.A."/>
            <person name="Norton J.M."/>
            <person name="Poret-Peterson A.T."/>
            <person name="Vergez L.M."/>
            <person name="Ward B.B."/>
        </authorList>
    </citation>
    <scope>NUCLEOTIDE SEQUENCE [LARGE SCALE GENOMIC DNA]</scope>
    <source>
        <strain>ATCC 19707 / BCRC 17464 / JCM 30415 / NCIMB 11848 / C-107</strain>
    </source>
</reference>
<protein>
    <recommendedName>
        <fullName evidence="1">Aspartate 1-decarboxylase</fullName>
        <ecNumber evidence="1">4.1.1.11</ecNumber>
    </recommendedName>
    <alternativeName>
        <fullName evidence="1">Aspartate alpha-decarboxylase</fullName>
    </alternativeName>
    <component>
        <recommendedName>
            <fullName evidence="1">Aspartate 1-decarboxylase beta chain</fullName>
        </recommendedName>
    </component>
    <component>
        <recommendedName>
            <fullName evidence="1">Aspartate 1-decarboxylase alpha chain</fullName>
        </recommendedName>
    </component>
</protein>
<keyword id="KW-0068">Autocatalytic cleavage</keyword>
<keyword id="KW-0963">Cytoplasm</keyword>
<keyword id="KW-0210">Decarboxylase</keyword>
<keyword id="KW-0456">Lyase</keyword>
<keyword id="KW-0566">Pantothenate biosynthesis</keyword>
<keyword id="KW-0670">Pyruvate</keyword>
<keyword id="KW-1185">Reference proteome</keyword>
<keyword id="KW-0704">Schiff base</keyword>
<keyword id="KW-0865">Zymogen</keyword>
<proteinExistence type="inferred from homology"/>
<organism>
    <name type="scientific">Nitrosococcus oceani (strain ATCC 19707 / BCRC 17464 / JCM 30415 / NCIMB 11848 / C-107)</name>
    <dbReference type="NCBI Taxonomy" id="323261"/>
    <lineage>
        <taxon>Bacteria</taxon>
        <taxon>Pseudomonadati</taxon>
        <taxon>Pseudomonadota</taxon>
        <taxon>Gammaproteobacteria</taxon>
        <taxon>Chromatiales</taxon>
        <taxon>Chromatiaceae</taxon>
        <taxon>Nitrosococcus</taxon>
    </lineage>
</organism>
<dbReference type="EC" id="4.1.1.11" evidence="1"/>
<dbReference type="EMBL" id="CP000127">
    <property type="protein sequence ID" value="ABA57399.1"/>
    <property type="molecule type" value="Genomic_DNA"/>
</dbReference>
<dbReference type="RefSeq" id="WP_011330503.1">
    <property type="nucleotide sequence ID" value="NC_007484.1"/>
</dbReference>
<dbReference type="SMR" id="Q3JCP7"/>
<dbReference type="FunCoup" id="Q3JCP7">
    <property type="interactions" value="341"/>
</dbReference>
<dbReference type="STRING" id="323261.Noc_0887"/>
<dbReference type="KEGG" id="noc:Noc_0887"/>
<dbReference type="eggNOG" id="COG0853">
    <property type="taxonomic scope" value="Bacteria"/>
</dbReference>
<dbReference type="HOGENOM" id="CLU_115305_2_1_6"/>
<dbReference type="InParanoid" id="Q3JCP7"/>
<dbReference type="UniPathway" id="UPA00028">
    <property type="reaction ID" value="UER00002"/>
</dbReference>
<dbReference type="Proteomes" id="UP000006838">
    <property type="component" value="Chromosome"/>
</dbReference>
<dbReference type="GO" id="GO:0005829">
    <property type="term" value="C:cytosol"/>
    <property type="evidence" value="ECO:0007669"/>
    <property type="project" value="TreeGrafter"/>
</dbReference>
<dbReference type="GO" id="GO:0004068">
    <property type="term" value="F:aspartate 1-decarboxylase activity"/>
    <property type="evidence" value="ECO:0007669"/>
    <property type="project" value="UniProtKB-UniRule"/>
</dbReference>
<dbReference type="GO" id="GO:0006523">
    <property type="term" value="P:alanine biosynthetic process"/>
    <property type="evidence" value="ECO:0007669"/>
    <property type="project" value="InterPro"/>
</dbReference>
<dbReference type="GO" id="GO:0015940">
    <property type="term" value="P:pantothenate biosynthetic process"/>
    <property type="evidence" value="ECO:0007669"/>
    <property type="project" value="UniProtKB-UniRule"/>
</dbReference>
<dbReference type="CDD" id="cd06919">
    <property type="entry name" value="Asp_decarbox"/>
    <property type="match status" value="1"/>
</dbReference>
<dbReference type="Gene3D" id="2.40.40.20">
    <property type="match status" value="1"/>
</dbReference>
<dbReference type="HAMAP" id="MF_00446">
    <property type="entry name" value="PanD"/>
    <property type="match status" value="1"/>
</dbReference>
<dbReference type="InterPro" id="IPR009010">
    <property type="entry name" value="Asp_de-COase-like_dom_sf"/>
</dbReference>
<dbReference type="InterPro" id="IPR003190">
    <property type="entry name" value="Asp_decarbox"/>
</dbReference>
<dbReference type="NCBIfam" id="TIGR00223">
    <property type="entry name" value="panD"/>
    <property type="match status" value="1"/>
</dbReference>
<dbReference type="PANTHER" id="PTHR21012">
    <property type="entry name" value="ASPARTATE 1-DECARBOXYLASE"/>
    <property type="match status" value="1"/>
</dbReference>
<dbReference type="PANTHER" id="PTHR21012:SF0">
    <property type="entry name" value="ASPARTATE 1-DECARBOXYLASE"/>
    <property type="match status" value="1"/>
</dbReference>
<dbReference type="Pfam" id="PF02261">
    <property type="entry name" value="Asp_decarbox"/>
    <property type="match status" value="1"/>
</dbReference>
<dbReference type="PIRSF" id="PIRSF006246">
    <property type="entry name" value="Asp_decarbox"/>
    <property type="match status" value="1"/>
</dbReference>
<dbReference type="SUPFAM" id="SSF50692">
    <property type="entry name" value="ADC-like"/>
    <property type="match status" value="1"/>
</dbReference>
<name>PAND_NITOC</name>
<accession>Q3JCP7</accession>
<comment type="function">
    <text evidence="1">Catalyzes the pyruvoyl-dependent decarboxylation of aspartate to produce beta-alanine.</text>
</comment>
<comment type="catalytic activity">
    <reaction evidence="1">
        <text>L-aspartate + H(+) = beta-alanine + CO2</text>
        <dbReference type="Rhea" id="RHEA:19497"/>
        <dbReference type="ChEBI" id="CHEBI:15378"/>
        <dbReference type="ChEBI" id="CHEBI:16526"/>
        <dbReference type="ChEBI" id="CHEBI:29991"/>
        <dbReference type="ChEBI" id="CHEBI:57966"/>
        <dbReference type="EC" id="4.1.1.11"/>
    </reaction>
</comment>
<comment type="cofactor">
    <cofactor evidence="1">
        <name>pyruvate</name>
        <dbReference type="ChEBI" id="CHEBI:15361"/>
    </cofactor>
    <text evidence="1">Binds 1 pyruvoyl group covalently per subunit.</text>
</comment>
<comment type="pathway">
    <text evidence="1">Cofactor biosynthesis; (R)-pantothenate biosynthesis; beta-alanine from L-aspartate: step 1/1.</text>
</comment>
<comment type="subunit">
    <text evidence="1">Heterooctamer of four alpha and four beta subunits.</text>
</comment>
<comment type="subcellular location">
    <subcellularLocation>
        <location evidence="1">Cytoplasm</location>
    </subcellularLocation>
</comment>
<comment type="PTM">
    <text evidence="1">Is synthesized initially as an inactive proenzyme, which is activated by self-cleavage at a specific serine bond to produce a beta-subunit with a hydroxyl group at its C-terminus and an alpha-subunit with a pyruvoyl group at its N-terminus.</text>
</comment>
<comment type="similarity">
    <text evidence="1">Belongs to the PanD family.</text>
</comment>
<gene>
    <name evidence="1" type="primary">panD</name>
    <name type="ordered locus">Noc_0887</name>
</gene>
<evidence type="ECO:0000255" key="1">
    <source>
        <dbReference type="HAMAP-Rule" id="MF_00446"/>
    </source>
</evidence>